<protein>
    <recommendedName>
        <fullName evidence="7">Polyubiquitin</fullName>
    </recommendedName>
    <component>
        <recommendedName>
            <fullName>Ubiquitin</fullName>
        </recommendedName>
    </component>
</protein>
<accession>P0CG63</accession>
<accession>D6VXW7</accession>
<accession>P04838</accession>
<accession>P61864</accession>
<accession>Q6LA96</accession>
<sequence>MQIFVKTLTGKTITLEVESSDTIDNVKSKIQDKEGIPPDQQRLIFAGKQLEDGRTLSDYNIQKESTLHLVLRLRGGMQIFVKTLTGKTITLEVESSDTIDNVKSKIQDKEGIPPDQQRLIFAGKQLEDGRTLSDYNIQKESTLHLVLRLRGGMQIFVKTLTGKTITLEVESSDTIDNVKSKIQDKEGIPPDQQRLIFAGKQLEDGRTLSDYNIQKESTLHLVLRLRGGMQIFVKTLTGKTITLEVESSDTIDNVKSKIQDKEGIPPDQQRLIFAGKQLEDGRTLSDYNIQKESTLHLVLRLRGGMQIFVKTLTGKTITLEVESSDTIDNVKSKIQDKEGIPPDQQRLIFAGKQLEDGRTLSDYNIQKESTLHLVLRLRGGN</sequence>
<feature type="chain" id="PRO_0000396306" description="Ubiquitin">
    <location>
        <begin position="1"/>
        <end position="76"/>
    </location>
</feature>
<feature type="chain" id="PRO_0000396307" description="Ubiquitin">
    <location>
        <begin position="77"/>
        <end position="152"/>
    </location>
</feature>
<feature type="chain" id="PRO_0000396308" description="Ubiquitin">
    <location>
        <begin position="153"/>
        <end position="228"/>
    </location>
</feature>
<feature type="chain" id="PRO_0000396309" description="Ubiquitin">
    <location>
        <begin position="229"/>
        <end position="304"/>
    </location>
</feature>
<feature type="chain" id="PRO_0000396310" description="Ubiquitin">
    <location>
        <begin position="305"/>
        <end position="380"/>
    </location>
</feature>
<feature type="propeptide" id="PRO_0000396311">
    <location>
        <position position="381"/>
    </location>
</feature>
<feature type="domain" description="Ubiquitin-like 1" evidence="4">
    <location>
        <begin position="1"/>
        <end position="76"/>
    </location>
</feature>
<feature type="domain" description="Ubiquitin-like 2" evidence="4">
    <location>
        <begin position="77"/>
        <end position="152"/>
    </location>
</feature>
<feature type="domain" description="Ubiquitin-like 3" evidence="4">
    <location>
        <begin position="153"/>
        <end position="228"/>
    </location>
</feature>
<feature type="domain" description="Ubiquitin-like 4" evidence="4">
    <location>
        <begin position="229"/>
        <end position="304"/>
    </location>
</feature>
<feature type="domain" description="Ubiquitin-like 5" evidence="4">
    <location>
        <begin position="305"/>
        <end position="380"/>
    </location>
</feature>
<feature type="cross-link" description="Glycyl lysine isopeptide (Lys-Gly) (interchain with G-Cter in ubiquitin)" evidence="2">
    <location>
        <position position="6"/>
    </location>
</feature>
<feature type="cross-link" description="Glycyl lysine isopeptide (Lys-Gly) (interchain with G-Cter in ubiquitin)" evidence="2">
    <location>
        <position position="11"/>
    </location>
</feature>
<feature type="cross-link" description="Glycyl lysine isopeptide (Lys-Gly) (interchain with G-Cter in ubiquitin)" evidence="2">
    <location>
        <position position="27"/>
    </location>
</feature>
<feature type="cross-link" description="Glycyl lysine isopeptide (Lys-Gly) (interchain with G-Cter in ubiquitin)" evidence="2">
    <location>
        <position position="29"/>
    </location>
</feature>
<feature type="cross-link" description="Glycyl lysine isopeptide (Lys-Gly) (interchain with G-Cter in ubiquitin)" evidence="2">
    <location>
        <position position="33"/>
    </location>
</feature>
<feature type="cross-link" description="Glycyl lysine isopeptide (Lys-Gly) (interchain with G-Cter in ubiquitin)" evidence="6">
    <location>
        <position position="48"/>
    </location>
</feature>
<feature type="cross-link" description="Glycyl lysine isopeptide (Lys-Gly) (interchain with G-Cter in ubiquitin)" evidence="2">
    <location>
        <position position="63"/>
    </location>
</feature>
<feature type="cross-link" description="Glycyl lysine isopeptide (Gly-Lys) (interchain with K-? in acceptor proteins)" evidence="4">
    <location>
        <position position="76"/>
    </location>
</feature>
<feature type="mutagenesis site" description="Deficiency in ubiquitin-protein conjugate formation." evidence="5">
    <original>K</original>
    <variation>R</variation>
    <location>
        <position position="29"/>
    </location>
</feature>
<feature type="mutagenesis site" description="Deficiency in ubiquitin-protein conjugate formation." evidence="5 6">
    <original>K</original>
    <variation>R</variation>
    <location>
        <position position="48"/>
    </location>
</feature>
<feature type="mutagenesis site" description="Deficiency in ubiquitin-protein conjugate formation. Loss of DNA repair function." evidence="5">
    <original>K</original>
    <variation>R</variation>
    <location>
        <position position="63"/>
    </location>
</feature>
<feature type="sequence conflict" description="In Ref. 4; CAA25706." evidence="8" ref="4">
    <original>K</original>
    <variation>N</variation>
    <location>
        <position position="352"/>
    </location>
</feature>
<feature type="strand" evidence="11">
    <location>
        <begin position="231"/>
        <end position="234"/>
    </location>
</feature>
<feature type="strand" evidence="11">
    <location>
        <begin position="236"/>
        <end position="238"/>
    </location>
</feature>
<feature type="strand" evidence="11">
    <location>
        <begin position="241"/>
        <end position="243"/>
    </location>
</feature>
<feature type="helix" evidence="11">
    <location>
        <begin position="251"/>
        <end position="256"/>
    </location>
</feature>
<feature type="helix" evidence="11">
    <location>
        <begin position="266"/>
        <end position="268"/>
    </location>
</feature>
<feature type="strand" evidence="11">
    <location>
        <begin position="270"/>
        <end position="272"/>
    </location>
</feature>
<feature type="strand" evidence="11">
    <location>
        <begin position="274"/>
        <end position="277"/>
    </location>
</feature>
<feature type="helix" evidence="11">
    <location>
        <begin position="285"/>
        <end position="287"/>
    </location>
</feature>
<feature type="strand" evidence="11">
    <location>
        <begin position="294"/>
        <end position="298"/>
    </location>
</feature>
<feature type="strand" evidence="15">
    <location>
        <begin position="306"/>
        <end position="310"/>
    </location>
</feature>
<feature type="turn" evidence="10">
    <location>
        <begin position="312"/>
        <end position="314"/>
    </location>
</feature>
<feature type="strand" evidence="15">
    <location>
        <begin position="316"/>
        <end position="320"/>
    </location>
</feature>
<feature type="strand" evidence="10">
    <location>
        <begin position="323"/>
        <end position="326"/>
    </location>
</feature>
<feature type="helix" evidence="15">
    <location>
        <begin position="327"/>
        <end position="338"/>
    </location>
</feature>
<feature type="turn" evidence="15">
    <location>
        <begin position="342"/>
        <end position="344"/>
    </location>
</feature>
<feature type="strand" evidence="15">
    <location>
        <begin position="345"/>
        <end position="349"/>
    </location>
</feature>
<feature type="strand" evidence="14">
    <location>
        <begin position="351"/>
        <end position="353"/>
    </location>
</feature>
<feature type="strand" evidence="13">
    <location>
        <begin position="358"/>
        <end position="360"/>
    </location>
</feature>
<feature type="helix" evidence="15">
    <location>
        <begin position="361"/>
        <end position="363"/>
    </location>
</feature>
<feature type="strand" evidence="15">
    <location>
        <begin position="370"/>
        <end position="375"/>
    </location>
</feature>
<feature type="helix" evidence="12">
    <location>
        <begin position="377"/>
        <end position="379"/>
    </location>
</feature>
<proteinExistence type="evidence at protein level"/>
<gene>
    <name evidence="7" type="primary">UBI4</name>
    <name type="synonym">SCD2</name>
    <name evidence="9" type="ordered locus">YLL039C</name>
</gene>
<name>UBI4P_YEAST</name>
<evidence type="ECO:0000250" key="1"/>
<evidence type="ECO:0000250" key="2">
    <source>
        <dbReference type="UniProtKB" id="P0CG47"/>
    </source>
</evidence>
<evidence type="ECO:0000250" key="3">
    <source>
        <dbReference type="UniProtKB" id="Q15843"/>
    </source>
</evidence>
<evidence type="ECO:0000255" key="4">
    <source>
        <dbReference type="PROSITE-ProRule" id="PRU00214"/>
    </source>
</evidence>
<evidence type="ECO:0000269" key="5">
    <source>
    </source>
</evidence>
<evidence type="ECO:0000269" key="6">
    <source>
    </source>
</evidence>
<evidence type="ECO:0000303" key="7">
    <source>
    </source>
</evidence>
<evidence type="ECO:0000305" key="8"/>
<evidence type="ECO:0000312" key="9">
    <source>
        <dbReference type="SGD" id="S000003962"/>
    </source>
</evidence>
<evidence type="ECO:0007829" key="10">
    <source>
        <dbReference type="PDB" id="1Q0W"/>
    </source>
</evidence>
<evidence type="ECO:0007829" key="11">
    <source>
        <dbReference type="PDB" id="1ZW7"/>
    </source>
</evidence>
<evidence type="ECO:0007829" key="12">
    <source>
        <dbReference type="PDB" id="2JT4"/>
    </source>
</evidence>
<evidence type="ECO:0007829" key="13">
    <source>
        <dbReference type="PDB" id="3OLM"/>
    </source>
</evidence>
<evidence type="ECO:0007829" key="14">
    <source>
        <dbReference type="PDB" id="4NNJ"/>
    </source>
</evidence>
<evidence type="ECO:0007829" key="15">
    <source>
        <dbReference type="PDB" id="4Q5E"/>
    </source>
</evidence>
<keyword id="KW-0002">3D-structure</keyword>
<keyword id="KW-0963">Cytoplasm</keyword>
<keyword id="KW-1017">Isopeptide bond</keyword>
<keyword id="KW-0539">Nucleus</keyword>
<keyword id="KW-1185">Reference proteome</keyword>
<keyword id="KW-0677">Repeat</keyword>
<keyword id="KW-0832">Ubl conjugation</keyword>
<organism>
    <name type="scientific">Saccharomyces cerevisiae (strain ATCC 204508 / S288c)</name>
    <name type="common">Baker's yeast</name>
    <dbReference type="NCBI Taxonomy" id="559292"/>
    <lineage>
        <taxon>Eukaryota</taxon>
        <taxon>Fungi</taxon>
        <taxon>Dikarya</taxon>
        <taxon>Ascomycota</taxon>
        <taxon>Saccharomycotina</taxon>
        <taxon>Saccharomycetes</taxon>
        <taxon>Saccharomycetales</taxon>
        <taxon>Saccharomycetaceae</taxon>
        <taxon>Saccharomyces</taxon>
    </lineage>
</organism>
<reference key="1">
    <citation type="journal article" date="1987" name="EMBO J.">
        <title>The yeast ubiquitin genes: a family of natural gene fusions.</title>
        <authorList>
            <person name="Oezkaynak E."/>
            <person name="Finley D."/>
            <person name="Solomon M.J."/>
            <person name="Varshavsky A."/>
        </authorList>
    </citation>
    <scope>NUCLEOTIDE SEQUENCE [GENOMIC DNA]</scope>
</reference>
<reference key="2">
    <citation type="journal article" date="1997" name="Nature">
        <title>The nucleotide sequence of Saccharomyces cerevisiae chromosome XII.</title>
        <authorList>
            <person name="Johnston M."/>
            <person name="Hillier L.W."/>
            <person name="Riles L."/>
            <person name="Albermann K."/>
            <person name="Andre B."/>
            <person name="Ansorge W."/>
            <person name="Benes V."/>
            <person name="Brueckner M."/>
            <person name="Delius H."/>
            <person name="Dubois E."/>
            <person name="Duesterhoeft A."/>
            <person name="Entian K.-D."/>
            <person name="Floeth M."/>
            <person name="Goffeau A."/>
            <person name="Hebling U."/>
            <person name="Heumann K."/>
            <person name="Heuss-Neitzel D."/>
            <person name="Hilbert H."/>
            <person name="Hilger F."/>
            <person name="Kleine K."/>
            <person name="Koetter P."/>
            <person name="Louis E.J."/>
            <person name="Messenguy F."/>
            <person name="Mewes H.-W."/>
            <person name="Miosga T."/>
            <person name="Moestl D."/>
            <person name="Mueller-Auer S."/>
            <person name="Nentwich U."/>
            <person name="Obermaier B."/>
            <person name="Piravandi E."/>
            <person name="Pohl T.M."/>
            <person name="Portetelle D."/>
            <person name="Purnelle B."/>
            <person name="Rechmann S."/>
            <person name="Rieger M."/>
            <person name="Rinke M."/>
            <person name="Rose M."/>
            <person name="Scharfe M."/>
            <person name="Scherens B."/>
            <person name="Scholler P."/>
            <person name="Schwager C."/>
            <person name="Schwarz S."/>
            <person name="Underwood A.P."/>
            <person name="Urrestarazu L.A."/>
            <person name="Vandenbol M."/>
            <person name="Verhasselt P."/>
            <person name="Vierendeels F."/>
            <person name="Voet M."/>
            <person name="Volckaert G."/>
            <person name="Voss H."/>
            <person name="Wambutt R."/>
            <person name="Wedler E."/>
            <person name="Wedler H."/>
            <person name="Zimmermann F.K."/>
            <person name="Zollner A."/>
            <person name="Hani J."/>
            <person name="Hoheisel J.D."/>
        </authorList>
    </citation>
    <scope>NUCLEOTIDE SEQUENCE [LARGE SCALE GENOMIC DNA]</scope>
    <source>
        <strain>ATCC 204508 / S288c</strain>
    </source>
</reference>
<reference key="3">
    <citation type="journal article" date="2014" name="G3 (Bethesda)">
        <title>The reference genome sequence of Saccharomyces cerevisiae: Then and now.</title>
        <authorList>
            <person name="Engel S.R."/>
            <person name="Dietrich F.S."/>
            <person name="Fisk D.G."/>
            <person name="Binkley G."/>
            <person name="Balakrishnan R."/>
            <person name="Costanzo M.C."/>
            <person name="Dwight S.S."/>
            <person name="Hitz B.C."/>
            <person name="Karra K."/>
            <person name="Nash R.S."/>
            <person name="Weng S."/>
            <person name="Wong E.D."/>
            <person name="Lloyd P."/>
            <person name="Skrzypek M.S."/>
            <person name="Miyasato S.R."/>
            <person name="Simison M."/>
            <person name="Cherry J.M."/>
        </authorList>
    </citation>
    <scope>GENOME REANNOTATION</scope>
    <source>
        <strain>ATCC 204508 / S288c</strain>
    </source>
</reference>
<reference key="4">
    <citation type="journal article" date="1984" name="Nature">
        <title>The yeast ubiquitin gene: head-to-tail repeats encoding a polyubiquitin precursor protein.</title>
        <authorList>
            <person name="Oezkaynak E."/>
            <person name="Finley D."/>
            <person name="Varshavsky A."/>
        </authorList>
    </citation>
    <scope>NUCLEOTIDE SEQUENCE [GENOMIC DNA] OF 191-381</scope>
</reference>
<reference key="5">
    <citation type="journal article" date="1995" name="J. Biol. Chem.">
        <title>A proteolytic pathway that recognizes ubiquitin as a degradation signal.</title>
        <authorList>
            <person name="Johnson E.S."/>
            <person name="Ma P.C.M."/>
            <person name="Ota I.M."/>
            <person name="Varshavsky A."/>
        </authorList>
    </citation>
    <scope>MUTAGENESIS OF LYS-29; LYS-48 AND LYS-63</scope>
</reference>
<reference key="6">
    <citation type="journal article" date="1995" name="Mol. Cell. Biol.">
        <title>A ubiquitin mutant with specific defects in DNA repair and multiubiquitination.</title>
        <authorList>
            <person name="Spence J."/>
            <person name="Sadis S."/>
            <person name="Haas A.L."/>
            <person name="Finley D."/>
        </authorList>
    </citation>
    <scope>MUTAGENESIS OF LYSINE RESIDUES</scope>
</reference>
<reference key="7">
    <citation type="journal article" date="2017" name="Nat. Commun.">
        <title>Ubiquitination of stalled ribosome triggers ribosome-associated quality control.</title>
        <authorList>
            <person name="Matsuo Y."/>
            <person name="Ikeuchi K."/>
            <person name="Saeki Y."/>
            <person name="Iwasaki S."/>
            <person name="Schmidt C."/>
            <person name="Udagawa T."/>
            <person name="Sato F."/>
            <person name="Tsuchiya H."/>
            <person name="Becker T."/>
            <person name="Tanaka K."/>
            <person name="Ingolia N.T."/>
            <person name="Beckmann R."/>
            <person name="Inada T."/>
        </authorList>
    </citation>
    <scope>UBIQUITINATION AT LYS-48 AND GLY-76</scope>
</reference>
<reference key="8">
    <citation type="journal article" date="1999" name="EMBO J.">
        <title>Structural basis for the specificity of ubiquitin C-terminal hydrolases.</title>
        <authorList>
            <person name="Johnston S.C."/>
            <person name="Riddle S.M."/>
            <person name="Cohen R.E."/>
            <person name="Hill C.P."/>
        </authorList>
    </citation>
    <scope>X-RAY CRYSTALLOGRAPHY (2.25 ANGSTROMS) IN COMPLEX WITH YUH1</scope>
</reference>
<reference key="9">
    <citation type="journal article" date="2003" name="EMBO J.">
        <title>A ubiquitin-binding motif required for intramolecular monoubiquitylation, the CUE domain.</title>
        <authorList>
            <person name="Shih S.C."/>
            <person name="Prag G."/>
            <person name="Francis S.A."/>
            <person name="Sutanto M.A."/>
            <person name="Hurley J.H."/>
            <person name="Hicke L."/>
        </authorList>
    </citation>
    <scope>X-RAY CRYSTALLOGRAPHY (1.7 ANGSTROMS) IN COMPLEX WITH VPS9</scope>
</reference>
<reference key="10">
    <citation type="journal article" date="2001" name="Structure">
        <title>Structure of a conjugating enzyme-ubiquitin thiolester intermediate reveals a novel role for the ubiquitin tail.</title>
        <authorList>
            <person name="Hamilton K.S."/>
            <person name="Ellison M.J."/>
            <person name="Barber K.R."/>
            <person name="Williams R.S."/>
            <person name="Huzil J.T."/>
            <person name="McKenna S."/>
            <person name="Ptak C."/>
            <person name="Glover M."/>
            <person name="Shaw G.S."/>
        </authorList>
    </citation>
    <scope>STRUCTURE BY NMR IN COMPLEX WITH UBC1</scope>
</reference>
<reference key="11">
    <citation type="journal article" date="2003" name="Cell">
        <title>Solution structure of a CUE-ubiquitin complex reveals a conserved mode of ubiquitin binding.</title>
        <authorList>
            <person name="Kang R.S."/>
            <person name="Daniels C.M."/>
            <person name="Francis S.A."/>
            <person name="Shih S.C."/>
            <person name="Salerno W.J."/>
            <person name="Hicke L."/>
            <person name="Radhakrishnan I."/>
        </authorList>
    </citation>
    <scope>STRUCTURE BY NMR OF COMPLEX WITH CUE2 N-TERMINAL DOMAIN</scope>
</reference>
<dbReference type="EMBL" id="X05731">
    <property type="protein sequence ID" value="CAA29198.1"/>
    <property type="molecule type" value="Genomic_DNA"/>
</dbReference>
<dbReference type="EMBL" id="Z73144">
    <property type="protein sequence ID" value="CAA97489.1"/>
    <property type="molecule type" value="Genomic_DNA"/>
</dbReference>
<dbReference type="EMBL" id="X01473">
    <property type="protein sequence ID" value="CAA25704.1"/>
    <property type="molecule type" value="Genomic_DNA"/>
</dbReference>
<dbReference type="EMBL" id="X01474">
    <property type="protein sequence ID" value="CAA25706.1"/>
    <property type="molecule type" value="Genomic_DNA"/>
</dbReference>
<dbReference type="EMBL" id="BK006945">
    <property type="protein sequence ID" value="DAA09283.1"/>
    <property type="molecule type" value="Genomic_DNA"/>
</dbReference>
<dbReference type="PIR" id="D29456">
    <property type="entry name" value="UQBY"/>
</dbReference>
<dbReference type="RefSeq" id="NP_013061.1">
    <property type="nucleotide sequence ID" value="NM_001181859.1"/>
</dbReference>
<dbReference type="PDB" id="1OTR">
    <property type="method" value="NMR"/>
    <property type="chains" value="B=1-76"/>
</dbReference>
<dbReference type="PDB" id="1Q0W">
    <property type="method" value="NMR"/>
    <property type="chains" value="B=1-76"/>
</dbReference>
<dbReference type="PDB" id="1WR1">
    <property type="method" value="NMR"/>
    <property type="chains" value="A=1-76"/>
</dbReference>
<dbReference type="PDB" id="1ZW7">
    <property type="method" value="NMR"/>
    <property type="chains" value="A=1-76"/>
</dbReference>
<dbReference type="PDB" id="2G3Q">
    <property type="method" value="NMR"/>
    <property type="chains" value="B=1-76"/>
</dbReference>
<dbReference type="PDB" id="2JT4">
    <property type="method" value="NMR"/>
    <property type="chains" value="B=1-76"/>
</dbReference>
<dbReference type="PDB" id="2JWZ">
    <property type="method" value="NMR"/>
    <property type="chains" value="A=1-76"/>
</dbReference>
<dbReference type="PDB" id="2KDI">
    <property type="method" value="NMR"/>
    <property type="chains" value="A=2-76"/>
</dbReference>
<dbReference type="PDB" id="2L00">
    <property type="method" value="NMR"/>
    <property type="chains" value="B=1-76"/>
</dbReference>
<dbReference type="PDB" id="3CMM">
    <property type="method" value="X-ray"/>
    <property type="resolution" value="2.70 A"/>
    <property type="chains" value="B/D=1-76"/>
</dbReference>
<dbReference type="PDB" id="3L0W">
    <property type="method" value="X-ray"/>
    <property type="resolution" value="2.80 A"/>
    <property type="chains" value="B=1-76"/>
</dbReference>
<dbReference type="PDB" id="3L10">
    <property type="method" value="X-ray"/>
    <property type="resolution" value="2.80 A"/>
    <property type="chains" value="B=1-76"/>
</dbReference>
<dbReference type="PDB" id="3OLM">
    <property type="method" value="X-ray"/>
    <property type="resolution" value="2.50 A"/>
    <property type="chains" value="D=1-76"/>
</dbReference>
<dbReference type="PDB" id="4HCN">
    <property type="method" value="X-ray"/>
    <property type="resolution" value="2.60 A"/>
    <property type="chains" value="B=1-76"/>
</dbReference>
<dbReference type="PDB" id="4NNJ">
    <property type="method" value="X-ray"/>
    <property type="resolution" value="2.40 A"/>
    <property type="chains" value="B/D/E=305-380"/>
</dbReference>
<dbReference type="PDB" id="4Q5E">
    <property type="method" value="X-ray"/>
    <property type="resolution" value="1.87 A"/>
    <property type="chains" value="B=305-380"/>
</dbReference>
<dbReference type="PDB" id="4Q5H">
    <property type="method" value="X-ray"/>
    <property type="resolution" value="2.00 A"/>
    <property type="chains" value="B=305-380"/>
</dbReference>
<dbReference type="PDB" id="8DAT">
    <property type="method" value="EM"/>
    <property type="resolution" value="3.80 A"/>
    <property type="chains" value="J/K/L=305-380"/>
</dbReference>
<dbReference type="PDB" id="8DAU">
    <property type="method" value="EM"/>
    <property type="resolution" value="3.70 A"/>
    <property type="chains" value="I/J/K=305-380"/>
</dbReference>
<dbReference type="PDB" id="8DAV">
    <property type="method" value="EM"/>
    <property type="resolution" value="3.50 A"/>
    <property type="chains" value="I/J/K=305-380"/>
</dbReference>
<dbReference type="PDB" id="8DAW">
    <property type="method" value="EM"/>
    <property type="resolution" value="3.60 A"/>
    <property type="chains" value="I/J/K/L=305-380"/>
</dbReference>
<dbReference type="PDBsum" id="1OTR"/>
<dbReference type="PDBsum" id="1Q0W"/>
<dbReference type="PDBsum" id="1WR1"/>
<dbReference type="PDBsum" id="1ZW7"/>
<dbReference type="PDBsum" id="2G3Q"/>
<dbReference type="PDBsum" id="2JT4"/>
<dbReference type="PDBsum" id="2JWZ"/>
<dbReference type="PDBsum" id="2KDI"/>
<dbReference type="PDBsum" id="2L00"/>
<dbReference type="PDBsum" id="3CMM"/>
<dbReference type="PDBsum" id="3L0W"/>
<dbReference type="PDBsum" id="3L10"/>
<dbReference type="PDBsum" id="3OLM"/>
<dbReference type="PDBsum" id="4HCN"/>
<dbReference type="PDBsum" id="4NNJ"/>
<dbReference type="PDBsum" id="4Q5E"/>
<dbReference type="PDBsum" id="4Q5H"/>
<dbReference type="PDBsum" id="8DAT"/>
<dbReference type="PDBsum" id="8DAU"/>
<dbReference type="PDBsum" id="8DAV"/>
<dbReference type="PDBsum" id="8DAW"/>
<dbReference type="BMRB" id="P0CG63"/>
<dbReference type="EMDB" id="EMD-27275"/>
<dbReference type="EMDB" id="EMD-27276"/>
<dbReference type="EMDB" id="EMD-27277"/>
<dbReference type="EMDB" id="EMD-27278"/>
<dbReference type="SMR" id="P0CG63"/>
<dbReference type="BioGRID" id="31215">
    <property type="interactions" value="748"/>
</dbReference>
<dbReference type="FunCoup" id="P0CG63">
    <property type="interactions" value="855"/>
</dbReference>
<dbReference type="IntAct" id="P0CG63">
    <property type="interactions" value="151"/>
</dbReference>
<dbReference type="MINT" id="P0CG63"/>
<dbReference type="STRING" id="4932.YLL039C"/>
<dbReference type="iPTMnet" id="P0CG63"/>
<dbReference type="PaxDb" id="4932-YLL039C"/>
<dbReference type="PeptideAtlas" id="P0CG63"/>
<dbReference type="TopDownProteomics" id="P0CG63"/>
<dbReference type="EnsemblFungi" id="YLL039C_mRNA">
    <property type="protein sequence ID" value="YLL039C"/>
    <property type="gene ID" value="YLL039C"/>
</dbReference>
<dbReference type="GeneID" id="850620"/>
<dbReference type="KEGG" id="sce:YLL039C"/>
<dbReference type="AGR" id="SGD:S000003962"/>
<dbReference type="SGD" id="S000003962">
    <property type="gene designation" value="UBI4"/>
</dbReference>
<dbReference type="VEuPathDB" id="FungiDB:YLL039C"/>
<dbReference type="eggNOG" id="KOG0001">
    <property type="taxonomic scope" value="Eukaryota"/>
</dbReference>
<dbReference type="GeneTree" id="ENSGT00940000162439"/>
<dbReference type="HOGENOM" id="CLU_010412_7_0_1"/>
<dbReference type="InParanoid" id="P0CG63"/>
<dbReference type="OMA" id="VHENTRR"/>
<dbReference type="OrthoDB" id="428577at2759"/>
<dbReference type="BioCyc" id="YEAST:G3O-32141-MONOMER"/>
<dbReference type="Reactome" id="R-SCE-110312">
    <property type="pathway name" value="Translesion synthesis by REV1"/>
</dbReference>
<dbReference type="Reactome" id="R-SCE-110320">
    <property type="pathway name" value="Translesion Synthesis by POLH"/>
</dbReference>
<dbReference type="Reactome" id="R-SCE-156827">
    <property type="pathway name" value="L13a-mediated translational silencing of Ceruloplasmin expression"/>
</dbReference>
<dbReference type="Reactome" id="R-SCE-1799339">
    <property type="pathway name" value="SRP-dependent cotranslational protein targeting to membrane"/>
</dbReference>
<dbReference type="Reactome" id="R-SCE-5205685">
    <property type="pathway name" value="PINK1-PRKN Mediated Mitophagy"/>
</dbReference>
<dbReference type="Reactome" id="R-SCE-5655862">
    <property type="pathway name" value="Translesion synthesis by POLK"/>
</dbReference>
<dbReference type="Reactome" id="R-SCE-5656121">
    <property type="pathway name" value="Translesion synthesis by POLI"/>
</dbReference>
<dbReference type="Reactome" id="R-SCE-5656169">
    <property type="pathway name" value="Termination of translesion DNA synthesis"/>
</dbReference>
<dbReference type="Reactome" id="R-SCE-5687128">
    <property type="pathway name" value="MAPK6/MAPK4 signaling"/>
</dbReference>
<dbReference type="Reactome" id="R-SCE-5689603">
    <property type="pathway name" value="UCH proteinases"/>
</dbReference>
<dbReference type="Reactome" id="R-SCE-5689877">
    <property type="pathway name" value="Josephin domain DUBs"/>
</dbReference>
<dbReference type="Reactome" id="R-SCE-5689880">
    <property type="pathway name" value="Ub-specific processing proteases"/>
</dbReference>
<dbReference type="Reactome" id="R-SCE-5689901">
    <property type="pathway name" value="Metalloprotease DUBs"/>
</dbReference>
<dbReference type="Reactome" id="R-SCE-5693565">
    <property type="pathway name" value="Recruitment and ATM-mediated phosphorylation of repair and signaling proteins at DNA double strand breaks"/>
</dbReference>
<dbReference type="Reactome" id="R-SCE-6781823">
    <property type="pathway name" value="Formation of TC-NER Pre-Incision Complex"/>
</dbReference>
<dbReference type="Reactome" id="R-SCE-6782135">
    <property type="pathway name" value="Dual incision in TC-NER"/>
</dbReference>
<dbReference type="Reactome" id="R-SCE-6782210">
    <property type="pathway name" value="Gap-filling DNA repair synthesis and ligation in TC-NER"/>
</dbReference>
<dbReference type="Reactome" id="R-SCE-68949">
    <property type="pathway name" value="Orc1 removal from chromatin"/>
</dbReference>
<dbReference type="Reactome" id="R-SCE-69017">
    <property type="pathway name" value="CDK-mediated phosphorylation and removal of Cdc6"/>
</dbReference>
<dbReference type="Reactome" id="R-SCE-69601">
    <property type="pathway name" value="Ubiquitin Mediated Degradation of Phosphorylated Cdc25A"/>
</dbReference>
<dbReference type="Reactome" id="R-SCE-72689">
    <property type="pathway name" value="Formation of a pool of free 40S subunits"/>
</dbReference>
<dbReference type="Reactome" id="R-SCE-72706">
    <property type="pathway name" value="GTP hydrolysis and joining of the 60S ribosomal subunit"/>
</dbReference>
<dbReference type="Reactome" id="R-SCE-8854050">
    <property type="pathway name" value="FBXL7 down-regulates AURKA during mitotic entry and in early mitosis"/>
</dbReference>
<dbReference type="Reactome" id="R-SCE-8866652">
    <property type="pathway name" value="Synthesis of active ubiquitin: roles of E1 and E2 enzymes"/>
</dbReference>
<dbReference type="Reactome" id="R-SCE-8866654">
    <property type="pathway name" value="E3 ubiquitin ligases ubiquitinate target proteins"/>
</dbReference>
<dbReference type="Reactome" id="R-SCE-8948747">
    <property type="pathway name" value="Regulation of PTEN localization"/>
</dbReference>
<dbReference type="Reactome" id="R-SCE-8948751">
    <property type="pathway name" value="Regulation of PTEN stability and activity"/>
</dbReference>
<dbReference type="Reactome" id="R-SCE-8951664">
    <property type="pathway name" value="Neddylation"/>
</dbReference>
<dbReference type="Reactome" id="R-SCE-901032">
    <property type="pathway name" value="ER Quality Control Compartment (ERQC)"/>
</dbReference>
<dbReference type="Reactome" id="R-SCE-9020702">
    <property type="pathway name" value="Interleukin-1 signaling"/>
</dbReference>
<dbReference type="Reactome" id="R-SCE-9033241">
    <property type="pathway name" value="Peroxisomal protein import"/>
</dbReference>
<dbReference type="Reactome" id="R-SCE-917729">
    <property type="pathway name" value="Endosomal Sorting Complex Required For Transport (ESCRT)"/>
</dbReference>
<dbReference type="Reactome" id="R-SCE-936440">
    <property type="pathway name" value="Negative regulators of DDX58/IFIH1 signaling"/>
</dbReference>
<dbReference type="Reactome" id="R-SCE-9646399">
    <property type="pathway name" value="Aggrephagy"/>
</dbReference>
<dbReference type="Reactome" id="R-SCE-9648002">
    <property type="pathway name" value="RAS processing"/>
</dbReference>
<dbReference type="Reactome" id="R-SCE-9664873">
    <property type="pathway name" value="Pexophagy"/>
</dbReference>
<dbReference type="Reactome" id="R-SCE-9755511">
    <property type="pathway name" value="KEAP1-NFE2L2 pathway"/>
</dbReference>
<dbReference type="Reactome" id="R-SCE-975956">
    <property type="pathway name" value="Nonsense Mediated Decay (NMD) independent of the Exon Junction Complex (EJC)"/>
</dbReference>
<dbReference type="Reactome" id="R-SCE-975957">
    <property type="pathway name" value="Nonsense Mediated Decay (NMD) enhanced by the Exon Junction Complex (EJC)"/>
</dbReference>
<dbReference type="Reactome" id="R-SCE-983168">
    <property type="pathway name" value="Antigen processing: Ubiquitination &amp; Proteasome degradation"/>
</dbReference>
<dbReference type="Reactome" id="R-SCE-9861718">
    <property type="pathway name" value="Regulation of pyruvate metabolism"/>
</dbReference>
<dbReference type="BioGRID-ORCS" id="850620">
    <property type="hits" value="0 hits in 10 CRISPR screens"/>
</dbReference>
<dbReference type="EvolutionaryTrace" id="P0CG63"/>
<dbReference type="PRO" id="PR:P0CG63"/>
<dbReference type="Proteomes" id="UP000002311">
    <property type="component" value="Chromosome XII"/>
</dbReference>
<dbReference type="RNAct" id="P0CG63">
    <property type="molecule type" value="protein"/>
</dbReference>
<dbReference type="GO" id="GO:0005737">
    <property type="term" value="C:cytoplasm"/>
    <property type="evidence" value="ECO:0000318"/>
    <property type="project" value="GO_Central"/>
</dbReference>
<dbReference type="GO" id="GO:0005829">
    <property type="term" value="C:cytosol"/>
    <property type="evidence" value="ECO:0000304"/>
    <property type="project" value="Reactome"/>
</dbReference>
<dbReference type="GO" id="GO:0005634">
    <property type="term" value="C:nucleus"/>
    <property type="evidence" value="ECO:0000318"/>
    <property type="project" value="GO_Central"/>
</dbReference>
<dbReference type="GO" id="GO:0005777">
    <property type="term" value="C:peroxisome"/>
    <property type="evidence" value="ECO:0000314"/>
    <property type="project" value="SGD"/>
</dbReference>
<dbReference type="GO" id="GO:0031386">
    <property type="term" value="F:protein tag activity"/>
    <property type="evidence" value="ECO:0000314"/>
    <property type="project" value="FlyBase"/>
</dbReference>
<dbReference type="GO" id="GO:0031625">
    <property type="term" value="F:ubiquitin protein ligase binding"/>
    <property type="evidence" value="ECO:0000318"/>
    <property type="project" value="GO_Central"/>
</dbReference>
<dbReference type="GO" id="GO:0019941">
    <property type="term" value="P:modification-dependent protein catabolic process"/>
    <property type="evidence" value="ECO:0000318"/>
    <property type="project" value="GO_Central"/>
</dbReference>
<dbReference type="GO" id="GO:0016567">
    <property type="term" value="P:protein ubiquitination"/>
    <property type="evidence" value="ECO:0000314"/>
    <property type="project" value="FlyBase"/>
</dbReference>
<dbReference type="CDD" id="cd01803">
    <property type="entry name" value="Ubl_ubiquitin"/>
    <property type="match status" value="5"/>
</dbReference>
<dbReference type="FunFam" id="3.10.20.90:FF:000004">
    <property type="entry name" value="Polyubiquitin Ubiquitin"/>
    <property type="match status" value="5"/>
</dbReference>
<dbReference type="Gene3D" id="3.10.20.90">
    <property type="entry name" value="Phosphatidylinositol 3-kinase Catalytic Subunit, Chain A, domain 1"/>
    <property type="match status" value="5"/>
</dbReference>
<dbReference type="InterPro" id="IPR000626">
    <property type="entry name" value="Ubiquitin-like_dom"/>
</dbReference>
<dbReference type="InterPro" id="IPR029071">
    <property type="entry name" value="Ubiquitin-like_domsf"/>
</dbReference>
<dbReference type="InterPro" id="IPR019954">
    <property type="entry name" value="Ubiquitin_CS"/>
</dbReference>
<dbReference type="InterPro" id="IPR019956">
    <property type="entry name" value="Ubiquitin_dom"/>
</dbReference>
<dbReference type="InterPro" id="IPR050158">
    <property type="entry name" value="Ubiquitin_ubiquitin-like"/>
</dbReference>
<dbReference type="PANTHER" id="PTHR10666">
    <property type="entry name" value="UBIQUITIN"/>
    <property type="match status" value="1"/>
</dbReference>
<dbReference type="Pfam" id="PF00240">
    <property type="entry name" value="ubiquitin"/>
    <property type="match status" value="5"/>
</dbReference>
<dbReference type="PRINTS" id="PR00348">
    <property type="entry name" value="UBIQUITIN"/>
</dbReference>
<dbReference type="SMART" id="SM00213">
    <property type="entry name" value="UBQ"/>
    <property type="match status" value="5"/>
</dbReference>
<dbReference type="SUPFAM" id="SSF54236">
    <property type="entry name" value="Ubiquitin-like"/>
    <property type="match status" value="5"/>
</dbReference>
<dbReference type="PROSITE" id="PS00299">
    <property type="entry name" value="UBIQUITIN_1"/>
    <property type="match status" value="5"/>
</dbReference>
<dbReference type="PROSITE" id="PS50053">
    <property type="entry name" value="UBIQUITIN_2"/>
    <property type="match status" value="5"/>
</dbReference>
<comment type="function">
    <text evidence="2">Ubiquitin exists either covalently attached to another protein, or free (unanchored). When covalently bound, it is conjugated to target proteins via an isopeptide bond either as a monomer (monoubiquitin), a polymer linked via different Lys residues of the ubiquitin (polyubiquitin chains) or a linear polymer linked via the initiator Met of the ubiquitin (linear polyubiquitin chains). Polyubiquitin chains, when attached to a target protein, have different functions depending on the Lys residue of the ubiquitin that is linked: Lys-6-linked may be involved in DNA repair; Lys-11-linked is involved in ERAD (endoplasmic reticulum-associated degradation) and in cell-cycle regulation; Lys-29-linked is involved in lysosomal degradation; Lys-33-linked is involved in kinase modification; Lys-48-linked is involved in protein degradation via the proteasome; Lys-63-linked is involved in endocytosis, and DNA-damage responses. Linear polymer chains formed via attachment by the initiator Met lead to cell signaling. Ubiquitin is usually conjugated to Lys residues of target proteins, however, in rare cases, conjugation to Cys or Ser residues has been observed. When polyubiquitin is free (unanchored-polyubiquitin), it also has distinct roles, such as in activation of protein kinases, and in signaling (By similarity).</text>
</comment>
<comment type="interaction">
    <interactant intactId="EBI-7000452">
        <id>P0CG63</id>
    </interactant>
    <interactant intactId="EBI-5717">
        <id>P40087</id>
        <label>DDI1</label>
    </interactant>
    <organismsDiffer>false</organismsDiffer>
    <experiments>3</experiments>
</comment>
<comment type="interaction">
    <interactant intactId="EBI-7000452">
        <id>P0CG63</id>
    </interactant>
    <interactant intactId="EBI-6174">
        <id>P48510</id>
        <label>DSK2</label>
    </interactant>
    <organismsDiffer>false</organismsDiffer>
    <experiments>3</experiments>
</comment>
<comment type="interaction">
    <interactant intactId="EBI-7000452">
        <id>P0CG63</id>
    </interactant>
    <interactant intactId="EBI-8018">
        <id>P48365</id>
        <label>GYP7</label>
    </interactant>
    <organismsDiffer>false</organismsDiffer>
    <experiments>2</experiments>
</comment>
<comment type="interaction">
    <interactant intactId="EBI-7000452">
        <id>P0CG63</id>
    </interactant>
    <interactant intactId="EBI-14668">
        <id>P32628</id>
        <label>RAD23</label>
    </interactant>
    <organismsDiffer>false</organismsDiffer>
    <experiments>4</experiments>
</comment>
<comment type="interaction">
    <interactant intactId="EBI-7000452">
        <id>P0CG63</id>
    </interactant>
    <interactant intactId="EBI-7212">
        <id>P00358</id>
        <label>TDH2</label>
    </interactant>
    <organismsDiffer>false</organismsDiffer>
    <experiments>2</experiments>
</comment>
<comment type="subcellular location">
    <subcellularLocation>
        <location evidence="1">Cytoplasm</location>
    </subcellularLocation>
    <subcellularLocation>
        <location evidence="3">Nucleus</location>
    </subcellularLocation>
</comment>
<comment type="miscellaneous">
    <text>Ubiquitin is encoded by several different genes. UBI1 and UBI2 genes code for a single copy of ubiquitin fused to the ribosomal proteins eL40A and eL40B, respectively. UBI3 is a polyprotein with one copy of ubiquitin fused to ribosomal protein eS31. UBI4 is a polyprotein containing 5 exact head to tail repeats of ubiquitin.</text>
</comment>
<comment type="miscellaneous">
    <text evidence="8">For the sake of clarity sequence features are annotated only for the first chain, and are not repeated for each of the following chains.</text>
</comment>
<comment type="similarity">
    <text evidence="8">Belongs to the ubiquitin family.</text>
</comment>